<feature type="chain" id="PRO_0000414285" description="U1 small nuclear ribonucleoprotein C">
    <location>
        <begin position="1"/>
        <end position="150"/>
    </location>
</feature>
<feature type="zinc finger region" description="Matrin-type" evidence="1">
    <location>
        <begin position="4"/>
        <end position="36"/>
    </location>
</feature>
<feature type="region of interest" description="Disordered" evidence="2">
    <location>
        <begin position="66"/>
        <end position="127"/>
    </location>
</feature>
<feature type="compositionally biased region" description="Basic and acidic residues" evidence="2">
    <location>
        <begin position="80"/>
        <end position="92"/>
    </location>
</feature>
<feature type="compositionally biased region" description="Acidic residues" evidence="2">
    <location>
        <begin position="103"/>
        <end position="112"/>
    </location>
</feature>
<reference key="1">
    <citation type="journal article" date="2009" name="Nature">
        <title>Evolution of pathogenicity and sexual reproduction in eight Candida genomes.</title>
        <authorList>
            <person name="Butler G."/>
            <person name="Rasmussen M.D."/>
            <person name="Lin M.F."/>
            <person name="Santos M.A.S."/>
            <person name="Sakthikumar S."/>
            <person name="Munro C.A."/>
            <person name="Rheinbay E."/>
            <person name="Grabherr M."/>
            <person name="Forche A."/>
            <person name="Reedy J.L."/>
            <person name="Agrafioti I."/>
            <person name="Arnaud M.B."/>
            <person name="Bates S."/>
            <person name="Brown A.J.P."/>
            <person name="Brunke S."/>
            <person name="Costanzo M.C."/>
            <person name="Fitzpatrick D.A."/>
            <person name="de Groot P.W.J."/>
            <person name="Harris D."/>
            <person name="Hoyer L.L."/>
            <person name="Hube B."/>
            <person name="Klis F.M."/>
            <person name="Kodira C."/>
            <person name="Lennard N."/>
            <person name="Logue M.E."/>
            <person name="Martin R."/>
            <person name="Neiman A.M."/>
            <person name="Nikolaou E."/>
            <person name="Quail M.A."/>
            <person name="Quinn J."/>
            <person name="Santos M.C."/>
            <person name="Schmitzberger F.F."/>
            <person name="Sherlock G."/>
            <person name="Shah P."/>
            <person name="Silverstein K.A.T."/>
            <person name="Skrzypek M.S."/>
            <person name="Soll D."/>
            <person name="Staggs R."/>
            <person name="Stansfield I."/>
            <person name="Stumpf M.P.H."/>
            <person name="Sudbery P.E."/>
            <person name="Srikantha T."/>
            <person name="Zeng Q."/>
            <person name="Berman J."/>
            <person name="Berriman M."/>
            <person name="Heitman J."/>
            <person name="Gow N.A.R."/>
            <person name="Lorenz M.C."/>
            <person name="Birren B.W."/>
            <person name="Kellis M."/>
            <person name="Cuomo C.A."/>
        </authorList>
    </citation>
    <scope>NUCLEOTIDE SEQUENCE [LARGE SCALE GENOMIC DNA]</scope>
    <source>
        <strain>WO-1</strain>
    </source>
</reference>
<protein>
    <recommendedName>
        <fullName evidence="1">U1 small nuclear ribonucleoprotein C</fullName>
        <shortName evidence="1">U1 snRNP C</shortName>
        <shortName evidence="1">U1-C</shortName>
        <shortName evidence="1">U1C</shortName>
    </recommendedName>
</protein>
<name>RU1C_CANAW</name>
<evidence type="ECO:0000255" key="1">
    <source>
        <dbReference type="HAMAP-Rule" id="MF_03153"/>
    </source>
</evidence>
<evidence type="ECO:0000256" key="2">
    <source>
        <dbReference type="SAM" id="MobiDB-lite"/>
    </source>
</evidence>
<gene>
    <name evidence="1" type="primary">YHC1</name>
    <name type="ORF">CAWG_04374</name>
</gene>
<comment type="function">
    <text evidence="1">Component of the spliceosomal U1 snRNP, which is essential for recognition of the pre-mRNA 5' splice-site and the subsequent assembly of the spliceosome. U1-C is directly involved in initial 5' splice-site recognition for both constitutive and regulated alternative splicing. The interaction with the 5' splice-site seems to precede base-pairing between the pre-mRNA and the U1 snRNA. Stimulates commitment or early (E) complex formation by stabilizing the base pairing of the 5' end of the U1 snRNA and the 5' splice-site region.</text>
</comment>
<comment type="subunit">
    <text evidence="1">U1 snRNP is composed of the 7 core Sm proteins B/B', D1, D2, D3, E, F and G that assemble in a heptameric protein ring on the Sm site of the small nuclear RNA to form the core snRNP, and at least 3 U1 snRNP-specific proteins U1-70K, U1-A and U1-C. U1-C interacts with U1 snRNA and the 5' splice-site region of the pre-mRNA.</text>
</comment>
<comment type="subcellular location">
    <subcellularLocation>
        <location evidence="1">Nucleus</location>
    </subcellularLocation>
</comment>
<comment type="similarity">
    <text evidence="1">Belongs to the U1 small nuclear ribonucleoprotein C family.</text>
</comment>
<organism>
    <name type="scientific">Candida albicans (strain WO-1)</name>
    <name type="common">Yeast</name>
    <dbReference type="NCBI Taxonomy" id="294748"/>
    <lineage>
        <taxon>Eukaryota</taxon>
        <taxon>Fungi</taxon>
        <taxon>Dikarya</taxon>
        <taxon>Ascomycota</taxon>
        <taxon>Saccharomycotina</taxon>
        <taxon>Pichiomycetes</taxon>
        <taxon>Debaryomycetaceae</taxon>
        <taxon>Candida/Lodderomyces clade</taxon>
        <taxon>Candida</taxon>
    </lineage>
</organism>
<keyword id="KW-0479">Metal-binding</keyword>
<keyword id="KW-0539">Nucleus</keyword>
<keyword id="KW-0687">Ribonucleoprotein</keyword>
<keyword id="KW-0694">RNA-binding</keyword>
<keyword id="KW-0862">Zinc</keyword>
<keyword id="KW-0863">Zinc-finger</keyword>
<sequence>MPKYYCDYCKSYLTHDTMSVRKSHLQGRNHIKFYCDYYEAKAKETNIWNPSSIPYEITLEKLNRYSDAKKSNGSSEDNMDIDKKENSSDHNKGNVVNHSDAGNDNDDDDDEMIFLPPPPNLSGLPLPTAAVYNNQKEYQKAILRQTLTKS</sequence>
<dbReference type="EMBL" id="CH672350">
    <property type="protein sequence ID" value="EEQ46030.1"/>
    <property type="molecule type" value="Genomic_DNA"/>
</dbReference>
<dbReference type="SMR" id="C4YIU5"/>
<dbReference type="PaxDb" id="5476-C4YIU5"/>
<dbReference type="VEuPathDB" id="FungiDB:CAWG_04374"/>
<dbReference type="HOGENOM" id="CLU_146144_0_0_1"/>
<dbReference type="OMA" id="YLTHDTM"/>
<dbReference type="OrthoDB" id="21145at766764"/>
<dbReference type="Proteomes" id="UP000001429">
    <property type="component" value="Chromosome 2, Supercontig 1.5"/>
</dbReference>
<dbReference type="GO" id="GO:0000243">
    <property type="term" value="C:commitment complex"/>
    <property type="evidence" value="ECO:0007669"/>
    <property type="project" value="UniProtKB-UniRule"/>
</dbReference>
<dbReference type="GO" id="GO:0005685">
    <property type="term" value="C:U1 snRNP"/>
    <property type="evidence" value="ECO:0007669"/>
    <property type="project" value="UniProtKB-UniRule"/>
</dbReference>
<dbReference type="GO" id="GO:0071004">
    <property type="term" value="C:U2-type prespliceosome"/>
    <property type="evidence" value="ECO:0007669"/>
    <property type="project" value="UniProtKB-UniRule"/>
</dbReference>
<dbReference type="GO" id="GO:0003729">
    <property type="term" value="F:mRNA binding"/>
    <property type="evidence" value="ECO:0007669"/>
    <property type="project" value="UniProtKB-UniRule"/>
</dbReference>
<dbReference type="GO" id="GO:0030627">
    <property type="term" value="F:pre-mRNA 5'-splice site binding"/>
    <property type="evidence" value="ECO:0007669"/>
    <property type="project" value="InterPro"/>
</dbReference>
<dbReference type="GO" id="GO:0030619">
    <property type="term" value="F:U1 snRNA binding"/>
    <property type="evidence" value="ECO:0007669"/>
    <property type="project" value="UniProtKB-UniRule"/>
</dbReference>
<dbReference type="GO" id="GO:0008270">
    <property type="term" value="F:zinc ion binding"/>
    <property type="evidence" value="ECO:0007669"/>
    <property type="project" value="UniProtKB-UniRule"/>
</dbReference>
<dbReference type="GO" id="GO:0000395">
    <property type="term" value="P:mRNA 5'-splice site recognition"/>
    <property type="evidence" value="ECO:0007669"/>
    <property type="project" value="UniProtKB-UniRule"/>
</dbReference>
<dbReference type="GO" id="GO:0000387">
    <property type="term" value="P:spliceosomal snRNP assembly"/>
    <property type="evidence" value="ECO:0007669"/>
    <property type="project" value="UniProtKB-UniRule"/>
</dbReference>
<dbReference type="FunFam" id="3.30.160.60:FF:000890">
    <property type="entry name" value="U1 small nuclear ribonucleoprotein C"/>
    <property type="match status" value="1"/>
</dbReference>
<dbReference type="Gene3D" id="3.30.160.60">
    <property type="entry name" value="Classic Zinc Finger"/>
    <property type="match status" value="1"/>
</dbReference>
<dbReference type="HAMAP" id="MF_03153">
    <property type="entry name" value="U1_C"/>
    <property type="match status" value="1"/>
</dbReference>
<dbReference type="InterPro" id="IPR000690">
    <property type="entry name" value="Matrin/U1-C_Znf_C2H2"/>
</dbReference>
<dbReference type="InterPro" id="IPR003604">
    <property type="entry name" value="Matrin/U1-like-C_Znf_C2H2"/>
</dbReference>
<dbReference type="InterPro" id="IPR013085">
    <property type="entry name" value="U1-CZ_Znf_C2H2"/>
</dbReference>
<dbReference type="InterPro" id="IPR017340">
    <property type="entry name" value="U1_snRNP-C"/>
</dbReference>
<dbReference type="InterPro" id="IPR036236">
    <property type="entry name" value="Znf_C2H2_sf"/>
</dbReference>
<dbReference type="PANTHER" id="PTHR31148">
    <property type="entry name" value="U1 SMALL NUCLEAR RIBONUCLEOPROTEIN C"/>
    <property type="match status" value="1"/>
</dbReference>
<dbReference type="PANTHER" id="PTHR31148:SF1">
    <property type="entry name" value="U1 SMALL NUCLEAR RIBONUCLEOPROTEIN C"/>
    <property type="match status" value="1"/>
</dbReference>
<dbReference type="Pfam" id="PF06220">
    <property type="entry name" value="zf-U1"/>
    <property type="match status" value="1"/>
</dbReference>
<dbReference type="PIRSF" id="PIRSF037969">
    <property type="entry name" value="U1_snRNP-C"/>
    <property type="match status" value="1"/>
</dbReference>
<dbReference type="SMART" id="SM00451">
    <property type="entry name" value="ZnF_U1"/>
    <property type="match status" value="1"/>
</dbReference>
<dbReference type="SUPFAM" id="SSF57667">
    <property type="entry name" value="beta-beta-alpha zinc fingers"/>
    <property type="match status" value="1"/>
</dbReference>
<dbReference type="PROSITE" id="PS50171">
    <property type="entry name" value="ZF_MATRIN"/>
    <property type="match status" value="1"/>
</dbReference>
<accession>C4YIU5</accession>
<proteinExistence type="inferred from homology"/>